<reference key="1">
    <citation type="journal article" date="2005" name="Nature">
        <title>Genomic sequence of the pathogenic and allergenic filamentous fungus Aspergillus fumigatus.</title>
        <authorList>
            <person name="Nierman W.C."/>
            <person name="Pain A."/>
            <person name="Anderson M.J."/>
            <person name="Wortman J.R."/>
            <person name="Kim H.S."/>
            <person name="Arroyo J."/>
            <person name="Berriman M."/>
            <person name="Abe K."/>
            <person name="Archer D.B."/>
            <person name="Bermejo C."/>
            <person name="Bennett J.W."/>
            <person name="Bowyer P."/>
            <person name="Chen D."/>
            <person name="Collins M."/>
            <person name="Coulsen R."/>
            <person name="Davies R."/>
            <person name="Dyer P.S."/>
            <person name="Farman M.L."/>
            <person name="Fedorova N."/>
            <person name="Fedorova N.D."/>
            <person name="Feldblyum T.V."/>
            <person name="Fischer R."/>
            <person name="Fosker N."/>
            <person name="Fraser A."/>
            <person name="Garcia J.L."/>
            <person name="Garcia M.J."/>
            <person name="Goble A."/>
            <person name="Goldman G.H."/>
            <person name="Gomi K."/>
            <person name="Griffith-Jones S."/>
            <person name="Gwilliam R."/>
            <person name="Haas B.J."/>
            <person name="Haas H."/>
            <person name="Harris D.E."/>
            <person name="Horiuchi H."/>
            <person name="Huang J."/>
            <person name="Humphray S."/>
            <person name="Jimenez J."/>
            <person name="Keller N."/>
            <person name="Khouri H."/>
            <person name="Kitamoto K."/>
            <person name="Kobayashi T."/>
            <person name="Konzack S."/>
            <person name="Kulkarni R."/>
            <person name="Kumagai T."/>
            <person name="Lafton A."/>
            <person name="Latge J.-P."/>
            <person name="Li W."/>
            <person name="Lord A."/>
            <person name="Lu C."/>
            <person name="Majoros W.H."/>
            <person name="May G.S."/>
            <person name="Miller B.L."/>
            <person name="Mohamoud Y."/>
            <person name="Molina M."/>
            <person name="Monod M."/>
            <person name="Mouyna I."/>
            <person name="Mulligan S."/>
            <person name="Murphy L.D."/>
            <person name="O'Neil S."/>
            <person name="Paulsen I."/>
            <person name="Penalva M.A."/>
            <person name="Pertea M."/>
            <person name="Price C."/>
            <person name="Pritchard B.L."/>
            <person name="Quail M.A."/>
            <person name="Rabbinowitsch E."/>
            <person name="Rawlins N."/>
            <person name="Rajandream M.A."/>
            <person name="Reichard U."/>
            <person name="Renauld H."/>
            <person name="Robson G.D."/>
            <person name="Rodriguez de Cordoba S."/>
            <person name="Rodriguez-Pena J.M."/>
            <person name="Ronning C.M."/>
            <person name="Rutter S."/>
            <person name="Salzberg S.L."/>
            <person name="Sanchez M."/>
            <person name="Sanchez-Ferrero J.C."/>
            <person name="Saunders D."/>
            <person name="Seeger K."/>
            <person name="Squares R."/>
            <person name="Squares S."/>
            <person name="Takeuchi M."/>
            <person name="Tekaia F."/>
            <person name="Turner G."/>
            <person name="Vazquez de Aldana C.R."/>
            <person name="Weidman J."/>
            <person name="White O."/>
            <person name="Woodward J.R."/>
            <person name="Yu J.-H."/>
            <person name="Fraser C.M."/>
            <person name="Galagan J.E."/>
            <person name="Asai K."/>
            <person name="Machida M."/>
            <person name="Hall N."/>
            <person name="Barrell B.G."/>
            <person name="Denning D.W."/>
        </authorList>
    </citation>
    <scope>NUCLEOTIDE SEQUENCE [LARGE SCALE GENOMIC DNA]</scope>
    <source>
        <strain>ATCC MYA-4609 / CBS 101355 / FGSC A1100 / Af293</strain>
    </source>
</reference>
<reference key="2">
    <citation type="journal article" date="2001" name="Electrophoresis">
        <title>Proteome analysis of Aspergillus fumigatus identifies glycosylphosphatidylinositol-anchored proteins associated to the cell wall biosynthesis.</title>
        <authorList>
            <person name="Bruneau J.-M."/>
            <person name="Magnin T."/>
            <person name="Tagat E."/>
            <person name="Legrand R."/>
            <person name="Bernard M."/>
            <person name="Diaquin M."/>
            <person name="Fudali C."/>
            <person name="Latge J.-P."/>
        </authorList>
    </citation>
    <scope>PROTEIN SEQUENCE OF 275-283 AND 288-298</scope>
    <scope>GPI-ANCHOR</scope>
</reference>
<reference key="3">
    <citation type="journal article" date="2003" name="Glycobiology">
        <title>Structures of the glycosylphosphatidylinositol membrane anchors from Aspergillus fumigatus membrane proteins.</title>
        <authorList>
            <person name="Fontaine T."/>
            <person name="Magnin T."/>
            <person name="Melhert A."/>
            <person name="Lamont D."/>
            <person name="Latge J.-P."/>
            <person name="Ferguson M.A.J."/>
        </authorList>
    </citation>
    <scope>PROTEIN SEQUENCE OF 235-249</scope>
    <scope>STRUCTURE OF GPI-ANCHOR</scope>
</reference>
<reference key="4">
    <citation type="journal article" date="2006" name="Appl. Environ. Microbiol.">
        <title>Glycosylphosphatidylinositol-anchored Ecm33p influences conidial cell wall biosynthesis in Aspergillus fumigatus.</title>
        <authorList>
            <person name="Chabane S."/>
            <person name="Sarfati J."/>
            <person name="Ibrahim-Granet O."/>
            <person name="Du C."/>
            <person name="Schmidt C."/>
            <person name="Mouyna I."/>
            <person name="Prevost M.-C."/>
            <person name="Calderone R."/>
            <person name="Latge J.-P."/>
        </authorList>
    </citation>
    <scope>FUNCTION</scope>
</reference>
<comment type="function">
    <text evidence="3">Involved in conidial and mycelial cell wall biogenesis.</text>
</comment>
<comment type="subcellular location">
    <subcellularLocation>
        <location>Cell membrane</location>
        <topology>Lipid-anchor</topology>
        <topology>GPI-anchor</topology>
    </subcellularLocation>
</comment>
<comment type="PTM">
    <text>The GPI-like anchor contains a phosphoceramide lipid group. The anchor position has not been determined.</text>
</comment>
<comment type="similarity">
    <text evidence="4">Belongs to the SPS2 family.</text>
</comment>
<protein>
    <recommendedName>
        <fullName>Protein ecm33</fullName>
    </recommendedName>
</protein>
<dbReference type="EMBL" id="AAHF01000005">
    <property type="protein sequence ID" value="EAL90106.1"/>
    <property type="molecule type" value="Genomic_DNA"/>
</dbReference>
<dbReference type="RefSeq" id="XP_752144.1">
    <property type="nucleotide sequence ID" value="XM_747051.1"/>
</dbReference>
<dbReference type="SMR" id="Q4WNS8"/>
<dbReference type="FunCoup" id="Q4WNS8">
    <property type="interactions" value="159"/>
</dbReference>
<dbReference type="STRING" id="330879.Q4WNS8"/>
<dbReference type="GlyCosmos" id="Q4WNS8">
    <property type="glycosylation" value="9 sites, No reported glycans"/>
</dbReference>
<dbReference type="EnsemblFungi" id="EAL90106">
    <property type="protein sequence ID" value="EAL90106"/>
    <property type="gene ID" value="AFUA_4G06820"/>
</dbReference>
<dbReference type="GeneID" id="3509473"/>
<dbReference type="KEGG" id="afm:AFUA_4G06820"/>
<dbReference type="VEuPathDB" id="FungiDB:Afu4g06820"/>
<dbReference type="eggNOG" id="ENOG502QUZC">
    <property type="taxonomic scope" value="Eukaryota"/>
</dbReference>
<dbReference type="HOGENOM" id="CLU_035846_0_1_1"/>
<dbReference type="InParanoid" id="Q4WNS8"/>
<dbReference type="OMA" id="WANNITF"/>
<dbReference type="OrthoDB" id="536881at2759"/>
<dbReference type="Proteomes" id="UP000002530">
    <property type="component" value="Chromosome 4"/>
</dbReference>
<dbReference type="GO" id="GO:0009277">
    <property type="term" value="C:fungal-type cell wall"/>
    <property type="evidence" value="ECO:0000314"/>
    <property type="project" value="AspGD"/>
</dbReference>
<dbReference type="GO" id="GO:0005886">
    <property type="term" value="C:plasma membrane"/>
    <property type="evidence" value="ECO:0000314"/>
    <property type="project" value="AspGD"/>
</dbReference>
<dbReference type="GO" id="GO:0098552">
    <property type="term" value="C:side of membrane"/>
    <property type="evidence" value="ECO:0007669"/>
    <property type="project" value="UniProtKB-KW"/>
</dbReference>
<dbReference type="Gene3D" id="3.80.10.10">
    <property type="entry name" value="Ribonuclease Inhibitor"/>
    <property type="match status" value="1"/>
</dbReference>
<dbReference type="InterPro" id="IPR051648">
    <property type="entry name" value="CWI-Assembly_Regulator"/>
</dbReference>
<dbReference type="InterPro" id="IPR026906">
    <property type="entry name" value="LRR_5"/>
</dbReference>
<dbReference type="InterPro" id="IPR032675">
    <property type="entry name" value="LRR_dom_sf"/>
</dbReference>
<dbReference type="PANTHER" id="PTHR31018:SF3">
    <property type="entry name" value="RECEPTOR PROTEIN-TYROSINE KINASE"/>
    <property type="match status" value="1"/>
</dbReference>
<dbReference type="PANTHER" id="PTHR31018">
    <property type="entry name" value="SPORULATION-SPECIFIC PROTEIN-RELATED"/>
    <property type="match status" value="1"/>
</dbReference>
<dbReference type="Pfam" id="PF12454">
    <property type="entry name" value="Ecm33"/>
    <property type="match status" value="1"/>
</dbReference>
<dbReference type="Pfam" id="PF13306">
    <property type="entry name" value="LRR_5"/>
    <property type="match status" value="1"/>
</dbReference>
<dbReference type="SUPFAM" id="SSF52058">
    <property type="entry name" value="L domain-like"/>
    <property type="match status" value="2"/>
</dbReference>
<gene>
    <name type="primary">ecm33</name>
    <name type="ORF">AFUA_4G06820</name>
</gene>
<sequence length="398" mass="41505">MAFLKYALPALAAAQAVLAANCGKTDETITISSQSDADGYSSCSTIKGTIEIDEHLSGAITFNNVKQIDGTLSCTGGANISSIAAPMLNSIADTFKLDGLTTLTTLSFPSLTSVGSIQWTALPQLQSLDFTKGVNEAGDVTITNTGLANLNGISLNTVGKFDITENTQLKSININNLKNATGLINFAGNLNSLEVELPNLSSGTNMTFRNVSAVSVPSLHNLTGQLGFWGDTFKSFSAPNLTETGDLVFNSNSKLTNISMPALETVNGGFLITRNDELSSIDLPSLKVVTGAVDFSGKFDEVSMPKLENVKGQFNLQSTGNFSCDTFDKAHNDKVIRGTYKCKAAEPNPTTKDGSSGTTTSSGSSASASKSNAADLNAANLPALGFAAVFGALVQYVL</sequence>
<evidence type="ECO:0000255" key="1"/>
<evidence type="ECO:0000256" key="2">
    <source>
        <dbReference type="SAM" id="MobiDB-lite"/>
    </source>
</evidence>
<evidence type="ECO:0000269" key="3">
    <source>
    </source>
</evidence>
<evidence type="ECO:0000305" key="4"/>
<name>ECM33_ASPFU</name>
<organism>
    <name type="scientific">Aspergillus fumigatus (strain ATCC MYA-4609 / CBS 101355 / FGSC A1100 / Af293)</name>
    <name type="common">Neosartorya fumigata</name>
    <dbReference type="NCBI Taxonomy" id="330879"/>
    <lineage>
        <taxon>Eukaryota</taxon>
        <taxon>Fungi</taxon>
        <taxon>Dikarya</taxon>
        <taxon>Ascomycota</taxon>
        <taxon>Pezizomycotina</taxon>
        <taxon>Eurotiomycetes</taxon>
        <taxon>Eurotiomycetidae</taxon>
        <taxon>Eurotiales</taxon>
        <taxon>Aspergillaceae</taxon>
        <taxon>Aspergillus</taxon>
        <taxon>Aspergillus subgen. Fumigati</taxon>
    </lineage>
</organism>
<feature type="signal peptide" evidence="1">
    <location>
        <begin position="1"/>
        <end position="19"/>
    </location>
</feature>
<feature type="chain" id="PRO_0000245545" description="Protein ecm33">
    <location>
        <begin position="20"/>
        <end position="372"/>
    </location>
</feature>
<feature type="propeptide" id="PRO_0000245546" description="Removed in mature form" evidence="1">
    <location>
        <begin position="373"/>
        <end position="398"/>
    </location>
</feature>
<feature type="region of interest" description="Disordered" evidence="2">
    <location>
        <begin position="344"/>
        <end position="369"/>
    </location>
</feature>
<feature type="compositionally biased region" description="Low complexity" evidence="2">
    <location>
        <begin position="349"/>
        <end position="369"/>
    </location>
</feature>
<feature type="lipid moiety-binding region" description="GPI-like-anchor amidated asparagine" evidence="1">
    <location>
        <position position="372"/>
    </location>
</feature>
<feature type="glycosylation site" description="N-linked (GlcNAc...) asparagine" evidence="1">
    <location>
        <position position="79"/>
    </location>
</feature>
<feature type="glycosylation site" description="N-linked (GlcNAc...) asparagine" evidence="1">
    <location>
        <position position="179"/>
    </location>
</feature>
<feature type="glycosylation site" description="N-linked (GlcNAc...) asparagine" evidence="1">
    <location>
        <position position="199"/>
    </location>
</feature>
<feature type="glycosylation site" description="N-linked (GlcNAc...) asparagine" evidence="1">
    <location>
        <position position="205"/>
    </location>
</feature>
<feature type="glycosylation site" description="N-linked (GlcNAc...) asparagine" evidence="1">
    <location>
        <position position="210"/>
    </location>
</feature>
<feature type="glycosylation site" description="N-linked (GlcNAc...) asparagine" evidence="1">
    <location>
        <position position="221"/>
    </location>
</feature>
<feature type="glycosylation site" description="N-linked (GlcNAc...) asparagine" evidence="1">
    <location>
        <position position="240"/>
    </location>
</feature>
<feature type="glycosylation site" description="N-linked (GlcNAc...) asparagine" evidence="1">
    <location>
        <position position="257"/>
    </location>
</feature>
<feature type="glycosylation site" description="N-linked (GlcNAc...) asparagine" evidence="1">
    <location>
        <position position="321"/>
    </location>
</feature>
<feature type="sequence conflict" description="In Ref. 3; AA sequence." evidence="4" ref="3">
    <original>T</original>
    <variation>TT</variation>
    <location>
        <position position="244"/>
    </location>
</feature>
<feature type="sequence conflict" description="In Ref. 3; AA sequence." evidence="4" ref="3">
    <location>
        <position position="247"/>
    </location>
</feature>
<proteinExistence type="evidence at protein level"/>
<accession>Q4WNS8</accession>
<keyword id="KW-1003">Cell membrane</keyword>
<keyword id="KW-0903">Direct protein sequencing</keyword>
<keyword id="KW-0325">Glycoprotein</keyword>
<keyword id="KW-0336">GPI-anchor</keyword>
<keyword id="KW-0449">Lipoprotein</keyword>
<keyword id="KW-0472">Membrane</keyword>
<keyword id="KW-1185">Reference proteome</keyword>
<keyword id="KW-0732">Signal</keyword>